<gene>
    <name type="primary">EFL3</name>
    <name type="synonym">ELF4-L3</name>
    <name type="ordered locus">At2g06255</name>
    <name type="ORF">F18P14</name>
</gene>
<evidence type="ECO:0000250" key="1"/>
<evidence type="ECO:0000256" key="2">
    <source>
        <dbReference type="SAM" id="MobiDB-lite"/>
    </source>
</evidence>
<evidence type="ECO:0000305" key="3"/>
<organism>
    <name type="scientific">Arabidopsis thaliana</name>
    <name type="common">Mouse-ear cress</name>
    <dbReference type="NCBI Taxonomy" id="3702"/>
    <lineage>
        <taxon>Eukaryota</taxon>
        <taxon>Viridiplantae</taxon>
        <taxon>Streptophyta</taxon>
        <taxon>Embryophyta</taxon>
        <taxon>Tracheophyta</taxon>
        <taxon>Spermatophyta</taxon>
        <taxon>Magnoliopsida</taxon>
        <taxon>eudicotyledons</taxon>
        <taxon>Gunneridae</taxon>
        <taxon>Pentapetalae</taxon>
        <taxon>rosids</taxon>
        <taxon>malvids</taxon>
        <taxon>Brassicales</taxon>
        <taxon>Brassicaceae</taxon>
        <taxon>Camelineae</taxon>
        <taxon>Arabidopsis</taxon>
    </lineage>
</organism>
<protein>
    <recommendedName>
        <fullName>Protein ELF4-LIKE 3</fullName>
    </recommendedName>
</protein>
<keyword id="KW-0090">Biological rhythms</keyword>
<keyword id="KW-0539">Nucleus</keyword>
<keyword id="KW-1185">Reference proteome</keyword>
<name>EF4L3_ARATH</name>
<feature type="chain" id="PRO_0000408505" description="Protein ELF4-LIKE 3">
    <location>
        <begin position="1"/>
        <end position="109"/>
    </location>
</feature>
<feature type="region of interest" description="Disordered" evidence="2">
    <location>
        <begin position="88"/>
        <end position="109"/>
    </location>
</feature>
<comment type="function">
    <text evidence="1">Component of the central CCA1/LHY-TOC1 feedback loop in the circadian clock that promotes clock accuracy and is required for sustained rhythms in the absence of daily light/dark cycles.</text>
</comment>
<comment type="subunit">
    <text evidence="1">Homodimer.</text>
</comment>
<comment type="subcellular location">
    <subcellularLocation>
        <location evidence="1">Nucleus</location>
    </subcellularLocation>
</comment>
<comment type="similarity">
    <text evidence="3">Belongs to the EARLY FLOWERING 4 family.</text>
</comment>
<dbReference type="EMBL" id="AC006918">
    <property type="protein sequence ID" value="AAM15312.1"/>
    <property type="molecule type" value="Genomic_DNA"/>
</dbReference>
<dbReference type="EMBL" id="CP002685">
    <property type="protein sequence ID" value="AEC06006.1"/>
    <property type="molecule type" value="Genomic_DNA"/>
</dbReference>
<dbReference type="EMBL" id="AY086681">
    <property type="protein sequence ID" value="AAM63737.1"/>
    <property type="molecule type" value="mRNA"/>
</dbReference>
<dbReference type="RefSeq" id="NP_565334.1">
    <property type="nucleotide sequence ID" value="NM_126634.3"/>
</dbReference>
<dbReference type="SMR" id="Q8S8F5"/>
<dbReference type="BioGRID" id="581">
    <property type="interactions" value="1"/>
</dbReference>
<dbReference type="STRING" id="3702.Q8S8F5"/>
<dbReference type="PaxDb" id="3702-AT2G06255.1"/>
<dbReference type="ProteomicsDB" id="224744"/>
<dbReference type="EnsemblPlants" id="AT2G06255.1">
    <property type="protein sequence ID" value="AT2G06255.1"/>
    <property type="gene ID" value="AT2G06255"/>
</dbReference>
<dbReference type="GeneID" id="815182"/>
<dbReference type="Gramene" id="AT2G06255.1">
    <property type="protein sequence ID" value="AT2G06255.1"/>
    <property type="gene ID" value="AT2G06255"/>
</dbReference>
<dbReference type="KEGG" id="ath:AT2G06255"/>
<dbReference type="Araport" id="AT2G06255"/>
<dbReference type="TAIR" id="AT2G06255">
    <property type="gene designation" value="ELF4-L3"/>
</dbReference>
<dbReference type="eggNOG" id="ENOG502RZ6B">
    <property type="taxonomic scope" value="Eukaryota"/>
</dbReference>
<dbReference type="HOGENOM" id="CLU_119738_1_0_1"/>
<dbReference type="InParanoid" id="Q8S8F5"/>
<dbReference type="OMA" id="MNFMESV"/>
<dbReference type="OrthoDB" id="1895690at2759"/>
<dbReference type="PhylomeDB" id="Q8S8F5"/>
<dbReference type="PRO" id="PR:Q8S8F5"/>
<dbReference type="Proteomes" id="UP000006548">
    <property type="component" value="Chromosome 2"/>
</dbReference>
<dbReference type="ExpressionAtlas" id="Q8S8F5">
    <property type="expression patterns" value="baseline and differential"/>
</dbReference>
<dbReference type="GO" id="GO:0005634">
    <property type="term" value="C:nucleus"/>
    <property type="evidence" value="ECO:0000250"/>
    <property type="project" value="UniProtKB"/>
</dbReference>
<dbReference type="GO" id="GO:0042803">
    <property type="term" value="F:protein homodimerization activity"/>
    <property type="evidence" value="ECO:0000250"/>
    <property type="project" value="UniProtKB"/>
</dbReference>
<dbReference type="GO" id="GO:0042753">
    <property type="term" value="P:positive regulation of circadian rhythm"/>
    <property type="evidence" value="ECO:0007669"/>
    <property type="project" value="InterPro"/>
</dbReference>
<dbReference type="GO" id="GO:0048511">
    <property type="term" value="P:rhythmic process"/>
    <property type="evidence" value="ECO:0007669"/>
    <property type="project" value="UniProtKB-KW"/>
</dbReference>
<dbReference type="InterPro" id="IPR040462">
    <property type="entry name" value="EARLY_FLOWERING_4"/>
</dbReference>
<dbReference type="InterPro" id="IPR009741">
    <property type="entry name" value="EARLY_FLOWERING_4_dom"/>
</dbReference>
<dbReference type="PANTHER" id="PTHR33469:SF38">
    <property type="entry name" value="PROTEIN ELF4-LIKE 3"/>
    <property type="match status" value="1"/>
</dbReference>
<dbReference type="PANTHER" id="PTHR33469">
    <property type="entry name" value="PROTEIN ELF4-LIKE 4"/>
    <property type="match status" value="1"/>
</dbReference>
<dbReference type="Pfam" id="PF07011">
    <property type="entry name" value="Elf4"/>
    <property type="match status" value="1"/>
</dbReference>
<reference key="1">
    <citation type="journal article" date="1999" name="Nature">
        <title>Sequence and analysis of chromosome 2 of the plant Arabidopsis thaliana.</title>
        <authorList>
            <person name="Lin X."/>
            <person name="Kaul S."/>
            <person name="Rounsley S.D."/>
            <person name="Shea T.P."/>
            <person name="Benito M.-I."/>
            <person name="Town C.D."/>
            <person name="Fujii C.Y."/>
            <person name="Mason T.M."/>
            <person name="Bowman C.L."/>
            <person name="Barnstead M.E."/>
            <person name="Feldblyum T.V."/>
            <person name="Buell C.R."/>
            <person name="Ketchum K.A."/>
            <person name="Lee J.J."/>
            <person name="Ronning C.M."/>
            <person name="Koo H.L."/>
            <person name="Moffat K.S."/>
            <person name="Cronin L.A."/>
            <person name="Shen M."/>
            <person name="Pai G."/>
            <person name="Van Aken S."/>
            <person name="Umayam L."/>
            <person name="Tallon L.J."/>
            <person name="Gill J.E."/>
            <person name="Adams M.D."/>
            <person name="Carrera A.J."/>
            <person name="Creasy T.H."/>
            <person name="Goodman H.M."/>
            <person name="Somerville C.R."/>
            <person name="Copenhaver G.P."/>
            <person name="Preuss D."/>
            <person name="Nierman W.C."/>
            <person name="White O."/>
            <person name="Eisen J.A."/>
            <person name="Salzberg S.L."/>
            <person name="Fraser C.M."/>
            <person name="Venter J.C."/>
        </authorList>
    </citation>
    <scope>NUCLEOTIDE SEQUENCE [LARGE SCALE GENOMIC DNA]</scope>
    <source>
        <strain>cv. Columbia</strain>
    </source>
</reference>
<reference key="2">
    <citation type="journal article" date="2017" name="Plant J.">
        <title>Araport11: a complete reannotation of the Arabidopsis thaliana reference genome.</title>
        <authorList>
            <person name="Cheng C.Y."/>
            <person name="Krishnakumar V."/>
            <person name="Chan A.P."/>
            <person name="Thibaud-Nissen F."/>
            <person name="Schobel S."/>
            <person name="Town C.D."/>
        </authorList>
    </citation>
    <scope>GENOME REANNOTATION</scope>
    <source>
        <strain>cv. Columbia</strain>
    </source>
</reference>
<reference key="3">
    <citation type="submission" date="2002-03" db="EMBL/GenBank/DDBJ databases">
        <title>Full-length cDNA from Arabidopsis thaliana.</title>
        <authorList>
            <person name="Brover V.V."/>
            <person name="Troukhan M.E."/>
            <person name="Alexandrov N.A."/>
            <person name="Lu Y.-P."/>
            <person name="Flavell R.B."/>
            <person name="Feldmann K.A."/>
        </authorList>
    </citation>
    <scope>NUCLEOTIDE SEQUENCE [LARGE SCALE MRNA]</scope>
</reference>
<reference key="4">
    <citation type="journal article" date="2003" name="Plant Physiol.">
        <title>EARLY FLOWERING 4 functions in phytochrome B-regulated seedling de-etiolation.</title>
        <authorList>
            <person name="Khanna R."/>
            <person name="Kikis E.A."/>
            <person name="Quail P.H."/>
        </authorList>
    </citation>
    <scope>GENE FAMILY</scope>
</reference>
<reference key="5">
    <citation type="journal article" date="2009" name="HFSP J.">
        <title>Integrating ELF4 into the circadian system through combined structural and functional studies.</title>
        <authorList>
            <person name="Kolmos E."/>
            <person name="Nowak M."/>
            <person name="Werner M."/>
            <person name="Fischer K."/>
            <person name="Schwarz G."/>
            <person name="Mathews S."/>
            <person name="Schoof H."/>
            <person name="Nagy F."/>
            <person name="Bujnicki J.M."/>
            <person name="Davis S.J."/>
        </authorList>
    </citation>
    <scope>GENE FAMILY</scope>
    <scope>NOMENCLATURE</scope>
</reference>
<accession>Q8S8F5</accession>
<sequence length="109" mass="12311">MEGDTISRMMGSGVQMDGKILQTFEKSFVQVQNILDHNRLLINEINQNHESKIPDNLGRNVGLIRELNNNVRRVAHLYVDLSNNFSKSMEASSEGDSSEGRGNRRIRPA</sequence>
<proteinExistence type="inferred from homology"/>